<dbReference type="EMBL" id="CP000116">
    <property type="protein sequence ID" value="AAZ96817.1"/>
    <property type="molecule type" value="Genomic_DNA"/>
</dbReference>
<dbReference type="RefSeq" id="WP_011311376.1">
    <property type="nucleotide sequence ID" value="NC_007404.1"/>
</dbReference>
<dbReference type="SMR" id="Q3SKG4"/>
<dbReference type="STRING" id="292415.Tbd_0864"/>
<dbReference type="KEGG" id="tbd:Tbd_0864"/>
<dbReference type="eggNOG" id="COG0261">
    <property type="taxonomic scope" value="Bacteria"/>
</dbReference>
<dbReference type="HOGENOM" id="CLU_061463_3_2_4"/>
<dbReference type="OrthoDB" id="9813334at2"/>
<dbReference type="Proteomes" id="UP000008291">
    <property type="component" value="Chromosome"/>
</dbReference>
<dbReference type="GO" id="GO:0005737">
    <property type="term" value="C:cytoplasm"/>
    <property type="evidence" value="ECO:0007669"/>
    <property type="project" value="UniProtKB-ARBA"/>
</dbReference>
<dbReference type="GO" id="GO:1990904">
    <property type="term" value="C:ribonucleoprotein complex"/>
    <property type="evidence" value="ECO:0007669"/>
    <property type="project" value="UniProtKB-KW"/>
</dbReference>
<dbReference type="GO" id="GO:0005840">
    <property type="term" value="C:ribosome"/>
    <property type="evidence" value="ECO:0007669"/>
    <property type="project" value="UniProtKB-KW"/>
</dbReference>
<dbReference type="GO" id="GO:0019843">
    <property type="term" value="F:rRNA binding"/>
    <property type="evidence" value="ECO:0007669"/>
    <property type="project" value="UniProtKB-UniRule"/>
</dbReference>
<dbReference type="GO" id="GO:0003735">
    <property type="term" value="F:structural constituent of ribosome"/>
    <property type="evidence" value="ECO:0007669"/>
    <property type="project" value="InterPro"/>
</dbReference>
<dbReference type="GO" id="GO:0006412">
    <property type="term" value="P:translation"/>
    <property type="evidence" value="ECO:0007669"/>
    <property type="project" value="UniProtKB-UniRule"/>
</dbReference>
<dbReference type="HAMAP" id="MF_01363">
    <property type="entry name" value="Ribosomal_bL21"/>
    <property type="match status" value="1"/>
</dbReference>
<dbReference type="InterPro" id="IPR028909">
    <property type="entry name" value="bL21-like"/>
</dbReference>
<dbReference type="InterPro" id="IPR036164">
    <property type="entry name" value="bL21-like_sf"/>
</dbReference>
<dbReference type="InterPro" id="IPR001787">
    <property type="entry name" value="Ribosomal_bL21"/>
</dbReference>
<dbReference type="InterPro" id="IPR018258">
    <property type="entry name" value="Ribosomal_bL21_CS"/>
</dbReference>
<dbReference type="NCBIfam" id="TIGR00061">
    <property type="entry name" value="L21"/>
    <property type="match status" value="1"/>
</dbReference>
<dbReference type="PANTHER" id="PTHR21349">
    <property type="entry name" value="50S RIBOSOMAL PROTEIN L21"/>
    <property type="match status" value="1"/>
</dbReference>
<dbReference type="PANTHER" id="PTHR21349:SF0">
    <property type="entry name" value="LARGE RIBOSOMAL SUBUNIT PROTEIN BL21M"/>
    <property type="match status" value="1"/>
</dbReference>
<dbReference type="Pfam" id="PF00829">
    <property type="entry name" value="Ribosomal_L21p"/>
    <property type="match status" value="1"/>
</dbReference>
<dbReference type="SUPFAM" id="SSF141091">
    <property type="entry name" value="L21p-like"/>
    <property type="match status" value="1"/>
</dbReference>
<dbReference type="PROSITE" id="PS01169">
    <property type="entry name" value="RIBOSOMAL_L21"/>
    <property type="match status" value="1"/>
</dbReference>
<feature type="chain" id="PRO_0000269416" description="Large ribosomal subunit protein bL21">
    <location>
        <begin position="1"/>
        <end position="103"/>
    </location>
</feature>
<reference key="1">
    <citation type="journal article" date="2006" name="J. Bacteriol.">
        <title>The genome sequence of the obligately chemolithoautotrophic, facultatively anaerobic bacterium Thiobacillus denitrificans.</title>
        <authorList>
            <person name="Beller H.R."/>
            <person name="Chain P.S."/>
            <person name="Letain T.E."/>
            <person name="Chakicherla A."/>
            <person name="Larimer F.W."/>
            <person name="Richardson P.M."/>
            <person name="Coleman M.A."/>
            <person name="Wood A.P."/>
            <person name="Kelly D.P."/>
        </authorList>
    </citation>
    <scope>NUCLEOTIDE SEQUENCE [LARGE SCALE GENOMIC DNA]</scope>
    <source>
        <strain>ATCC 25259 / T1</strain>
    </source>
</reference>
<evidence type="ECO:0000255" key="1">
    <source>
        <dbReference type="HAMAP-Rule" id="MF_01363"/>
    </source>
</evidence>
<evidence type="ECO:0000305" key="2"/>
<name>RL21_THIDA</name>
<proteinExistence type="inferred from homology"/>
<protein>
    <recommendedName>
        <fullName evidence="1">Large ribosomal subunit protein bL21</fullName>
    </recommendedName>
    <alternativeName>
        <fullName evidence="2">50S ribosomal protein L21</fullName>
    </alternativeName>
</protein>
<organism>
    <name type="scientific">Thiobacillus denitrificans (strain ATCC 25259 / T1)</name>
    <dbReference type="NCBI Taxonomy" id="292415"/>
    <lineage>
        <taxon>Bacteria</taxon>
        <taxon>Pseudomonadati</taxon>
        <taxon>Pseudomonadota</taxon>
        <taxon>Betaproteobacteria</taxon>
        <taxon>Nitrosomonadales</taxon>
        <taxon>Thiobacillaceae</taxon>
        <taxon>Thiobacillus</taxon>
    </lineage>
</organism>
<accession>Q3SKG4</accession>
<gene>
    <name evidence="1" type="primary">rplU</name>
    <name type="ordered locus">Tbd_0864</name>
</gene>
<sequence length="103" mass="11428">MYAVIKTGGKQYRVSAGDKLKIEKLEAEVGSEITFDQVLMVGDGADIKMGAPLLRGATVSATVLNQARGDKIKIFKMRRRKHYRKSQGHRQYFTEVQIGGITA</sequence>
<keyword id="KW-1185">Reference proteome</keyword>
<keyword id="KW-0687">Ribonucleoprotein</keyword>
<keyword id="KW-0689">Ribosomal protein</keyword>
<keyword id="KW-0694">RNA-binding</keyword>
<keyword id="KW-0699">rRNA-binding</keyword>
<comment type="function">
    <text evidence="1">This protein binds to 23S rRNA in the presence of protein L20.</text>
</comment>
<comment type="subunit">
    <text evidence="1">Part of the 50S ribosomal subunit. Contacts protein L20.</text>
</comment>
<comment type="similarity">
    <text evidence="1">Belongs to the bacterial ribosomal protein bL21 family.</text>
</comment>